<gene>
    <name evidence="1" type="primary">eno</name>
    <name type="ordered locus">Sden_1196</name>
</gene>
<organism>
    <name type="scientific">Shewanella denitrificans (strain OS217 / ATCC BAA-1090 / DSM 15013)</name>
    <dbReference type="NCBI Taxonomy" id="318161"/>
    <lineage>
        <taxon>Bacteria</taxon>
        <taxon>Pseudomonadati</taxon>
        <taxon>Pseudomonadota</taxon>
        <taxon>Gammaproteobacteria</taxon>
        <taxon>Alteromonadales</taxon>
        <taxon>Shewanellaceae</taxon>
        <taxon>Shewanella</taxon>
    </lineage>
</organism>
<evidence type="ECO:0000255" key="1">
    <source>
        <dbReference type="HAMAP-Rule" id="MF_00318"/>
    </source>
</evidence>
<name>ENO_SHEDO</name>
<proteinExistence type="inferred from homology"/>
<sequence length="431" mass="45633">MANIINVIGREIMDSRGNPTVEAEVHLAGGFIGMAAAPSGASTGSREALELRDGDKSRYLGKGVLNAVANINGVIKAALMGKDAAAQAELDQIMIDLDGTENKDKLGANAILAVSLAAAKAAAMSKGIPLYAHIAELNGTPGVYSMPVPMMNIINGGEHADNNVDIQEFMVQPVGAKNFREALRMGAEIFHSLKKVLQSKGLSTAVGDEGGFAPNLASNAEALAVIKVAVEEAGYKLGTDVTLALDCAATEFYKDGKYDLAGEGKVFDSNGFSDFLKSLADQYPIVSIEDGLDESDWEGWAYQTKIMGDKIQLVGDDLFVTNTKILTRGIENNIANSILIKFNQIGSLTETLAAIRMAKEAGYTAVISHRSGETEDSTIADLAVGTAAGQIKTGSLCRSDRVAKYNQLLRIEEQLGEKAPYRGLKEIKGQA</sequence>
<comment type="function">
    <text evidence="1">Catalyzes the reversible conversion of 2-phosphoglycerate (2-PG) into phosphoenolpyruvate (PEP). It is essential for the degradation of carbohydrates via glycolysis.</text>
</comment>
<comment type="catalytic activity">
    <reaction evidence="1">
        <text>(2R)-2-phosphoglycerate = phosphoenolpyruvate + H2O</text>
        <dbReference type="Rhea" id="RHEA:10164"/>
        <dbReference type="ChEBI" id="CHEBI:15377"/>
        <dbReference type="ChEBI" id="CHEBI:58289"/>
        <dbReference type="ChEBI" id="CHEBI:58702"/>
        <dbReference type="EC" id="4.2.1.11"/>
    </reaction>
</comment>
<comment type="cofactor">
    <cofactor evidence="1">
        <name>Mg(2+)</name>
        <dbReference type="ChEBI" id="CHEBI:18420"/>
    </cofactor>
    <text evidence="1">Binds a second Mg(2+) ion via substrate during catalysis.</text>
</comment>
<comment type="pathway">
    <text evidence="1">Carbohydrate degradation; glycolysis; pyruvate from D-glyceraldehyde 3-phosphate: step 4/5.</text>
</comment>
<comment type="subunit">
    <text evidence="1">Component of the RNA degradosome, a multiprotein complex involved in RNA processing and mRNA degradation.</text>
</comment>
<comment type="subcellular location">
    <subcellularLocation>
        <location evidence="1">Cytoplasm</location>
    </subcellularLocation>
    <subcellularLocation>
        <location evidence="1">Secreted</location>
    </subcellularLocation>
    <subcellularLocation>
        <location evidence="1">Cell surface</location>
    </subcellularLocation>
    <text evidence="1">Fractions of enolase are present in both the cytoplasm and on the cell surface.</text>
</comment>
<comment type="similarity">
    <text evidence="1">Belongs to the enolase family.</text>
</comment>
<feature type="chain" id="PRO_0000267100" description="Enolase">
    <location>
        <begin position="1"/>
        <end position="431"/>
    </location>
</feature>
<feature type="active site" description="Proton donor" evidence="1">
    <location>
        <position position="209"/>
    </location>
</feature>
<feature type="active site" description="Proton acceptor" evidence="1">
    <location>
        <position position="341"/>
    </location>
</feature>
<feature type="binding site" evidence="1">
    <location>
        <position position="167"/>
    </location>
    <ligand>
        <name>(2R)-2-phosphoglycerate</name>
        <dbReference type="ChEBI" id="CHEBI:58289"/>
    </ligand>
</feature>
<feature type="binding site" evidence="1">
    <location>
        <position position="246"/>
    </location>
    <ligand>
        <name>Mg(2+)</name>
        <dbReference type="ChEBI" id="CHEBI:18420"/>
    </ligand>
</feature>
<feature type="binding site" evidence="1">
    <location>
        <position position="289"/>
    </location>
    <ligand>
        <name>Mg(2+)</name>
        <dbReference type="ChEBI" id="CHEBI:18420"/>
    </ligand>
</feature>
<feature type="binding site" evidence="1">
    <location>
        <position position="316"/>
    </location>
    <ligand>
        <name>Mg(2+)</name>
        <dbReference type="ChEBI" id="CHEBI:18420"/>
    </ligand>
</feature>
<feature type="binding site" evidence="1">
    <location>
        <position position="341"/>
    </location>
    <ligand>
        <name>(2R)-2-phosphoglycerate</name>
        <dbReference type="ChEBI" id="CHEBI:58289"/>
    </ligand>
</feature>
<feature type="binding site" evidence="1">
    <location>
        <position position="370"/>
    </location>
    <ligand>
        <name>(2R)-2-phosphoglycerate</name>
        <dbReference type="ChEBI" id="CHEBI:58289"/>
    </ligand>
</feature>
<feature type="binding site" evidence="1">
    <location>
        <position position="371"/>
    </location>
    <ligand>
        <name>(2R)-2-phosphoglycerate</name>
        <dbReference type="ChEBI" id="CHEBI:58289"/>
    </ligand>
</feature>
<feature type="binding site" evidence="1">
    <location>
        <position position="392"/>
    </location>
    <ligand>
        <name>(2R)-2-phosphoglycerate</name>
        <dbReference type="ChEBI" id="CHEBI:58289"/>
    </ligand>
</feature>
<keyword id="KW-0963">Cytoplasm</keyword>
<keyword id="KW-0324">Glycolysis</keyword>
<keyword id="KW-0456">Lyase</keyword>
<keyword id="KW-0460">Magnesium</keyword>
<keyword id="KW-0479">Metal-binding</keyword>
<keyword id="KW-1185">Reference proteome</keyword>
<keyword id="KW-0964">Secreted</keyword>
<reference key="1">
    <citation type="submission" date="2006-03" db="EMBL/GenBank/DDBJ databases">
        <title>Complete sequence of Shewanella denitrificans OS217.</title>
        <authorList>
            <consortium name="US DOE Joint Genome Institute"/>
            <person name="Copeland A."/>
            <person name="Lucas S."/>
            <person name="Lapidus A."/>
            <person name="Barry K."/>
            <person name="Detter J.C."/>
            <person name="Glavina del Rio T."/>
            <person name="Hammon N."/>
            <person name="Israni S."/>
            <person name="Dalin E."/>
            <person name="Tice H."/>
            <person name="Pitluck S."/>
            <person name="Brettin T."/>
            <person name="Bruce D."/>
            <person name="Han C."/>
            <person name="Tapia R."/>
            <person name="Gilna P."/>
            <person name="Kiss H."/>
            <person name="Schmutz J."/>
            <person name="Larimer F."/>
            <person name="Land M."/>
            <person name="Hauser L."/>
            <person name="Kyrpides N."/>
            <person name="Lykidis A."/>
            <person name="Richardson P."/>
        </authorList>
    </citation>
    <scope>NUCLEOTIDE SEQUENCE [LARGE SCALE GENOMIC DNA]</scope>
    <source>
        <strain>OS217 / ATCC BAA-1090 / DSM 15013</strain>
    </source>
</reference>
<dbReference type="EC" id="4.2.1.11" evidence="1"/>
<dbReference type="EMBL" id="CP000302">
    <property type="protein sequence ID" value="ABE54482.1"/>
    <property type="molecule type" value="Genomic_DNA"/>
</dbReference>
<dbReference type="RefSeq" id="WP_011495642.1">
    <property type="nucleotide sequence ID" value="NC_007954.1"/>
</dbReference>
<dbReference type="SMR" id="Q12PZ4"/>
<dbReference type="STRING" id="318161.Sden_1196"/>
<dbReference type="KEGG" id="sdn:Sden_1196"/>
<dbReference type="eggNOG" id="COG0148">
    <property type="taxonomic scope" value="Bacteria"/>
</dbReference>
<dbReference type="HOGENOM" id="CLU_031223_2_1_6"/>
<dbReference type="OrthoDB" id="9804716at2"/>
<dbReference type="UniPathway" id="UPA00109">
    <property type="reaction ID" value="UER00187"/>
</dbReference>
<dbReference type="Proteomes" id="UP000001982">
    <property type="component" value="Chromosome"/>
</dbReference>
<dbReference type="GO" id="GO:0009986">
    <property type="term" value="C:cell surface"/>
    <property type="evidence" value="ECO:0007669"/>
    <property type="project" value="UniProtKB-SubCell"/>
</dbReference>
<dbReference type="GO" id="GO:0005576">
    <property type="term" value="C:extracellular region"/>
    <property type="evidence" value="ECO:0007669"/>
    <property type="project" value="UniProtKB-SubCell"/>
</dbReference>
<dbReference type="GO" id="GO:0000015">
    <property type="term" value="C:phosphopyruvate hydratase complex"/>
    <property type="evidence" value="ECO:0007669"/>
    <property type="project" value="InterPro"/>
</dbReference>
<dbReference type="GO" id="GO:0000287">
    <property type="term" value="F:magnesium ion binding"/>
    <property type="evidence" value="ECO:0007669"/>
    <property type="project" value="UniProtKB-UniRule"/>
</dbReference>
<dbReference type="GO" id="GO:0004634">
    <property type="term" value="F:phosphopyruvate hydratase activity"/>
    <property type="evidence" value="ECO:0007669"/>
    <property type="project" value="UniProtKB-UniRule"/>
</dbReference>
<dbReference type="GO" id="GO:0006096">
    <property type="term" value="P:glycolytic process"/>
    <property type="evidence" value="ECO:0007669"/>
    <property type="project" value="UniProtKB-UniRule"/>
</dbReference>
<dbReference type="CDD" id="cd03313">
    <property type="entry name" value="enolase"/>
    <property type="match status" value="1"/>
</dbReference>
<dbReference type="FunFam" id="3.20.20.120:FF:000001">
    <property type="entry name" value="Enolase"/>
    <property type="match status" value="1"/>
</dbReference>
<dbReference type="FunFam" id="3.30.390.10:FF:000001">
    <property type="entry name" value="Enolase"/>
    <property type="match status" value="1"/>
</dbReference>
<dbReference type="Gene3D" id="3.20.20.120">
    <property type="entry name" value="Enolase-like C-terminal domain"/>
    <property type="match status" value="1"/>
</dbReference>
<dbReference type="Gene3D" id="3.30.390.10">
    <property type="entry name" value="Enolase-like, N-terminal domain"/>
    <property type="match status" value="1"/>
</dbReference>
<dbReference type="HAMAP" id="MF_00318">
    <property type="entry name" value="Enolase"/>
    <property type="match status" value="1"/>
</dbReference>
<dbReference type="InterPro" id="IPR000941">
    <property type="entry name" value="Enolase"/>
</dbReference>
<dbReference type="InterPro" id="IPR036849">
    <property type="entry name" value="Enolase-like_C_sf"/>
</dbReference>
<dbReference type="InterPro" id="IPR029017">
    <property type="entry name" value="Enolase-like_N"/>
</dbReference>
<dbReference type="InterPro" id="IPR020810">
    <property type="entry name" value="Enolase_C"/>
</dbReference>
<dbReference type="InterPro" id="IPR020809">
    <property type="entry name" value="Enolase_CS"/>
</dbReference>
<dbReference type="InterPro" id="IPR020811">
    <property type="entry name" value="Enolase_N"/>
</dbReference>
<dbReference type="NCBIfam" id="TIGR01060">
    <property type="entry name" value="eno"/>
    <property type="match status" value="1"/>
</dbReference>
<dbReference type="PANTHER" id="PTHR11902">
    <property type="entry name" value="ENOLASE"/>
    <property type="match status" value="1"/>
</dbReference>
<dbReference type="PANTHER" id="PTHR11902:SF1">
    <property type="entry name" value="ENOLASE"/>
    <property type="match status" value="1"/>
</dbReference>
<dbReference type="Pfam" id="PF00113">
    <property type="entry name" value="Enolase_C"/>
    <property type="match status" value="1"/>
</dbReference>
<dbReference type="Pfam" id="PF03952">
    <property type="entry name" value="Enolase_N"/>
    <property type="match status" value="1"/>
</dbReference>
<dbReference type="PIRSF" id="PIRSF001400">
    <property type="entry name" value="Enolase"/>
    <property type="match status" value="1"/>
</dbReference>
<dbReference type="PRINTS" id="PR00148">
    <property type="entry name" value="ENOLASE"/>
</dbReference>
<dbReference type="SFLD" id="SFLDF00002">
    <property type="entry name" value="enolase"/>
    <property type="match status" value="1"/>
</dbReference>
<dbReference type="SFLD" id="SFLDG00178">
    <property type="entry name" value="enolase"/>
    <property type="match status" value="1"/>
</dbReference>
<dbReference type="SMART" id="SM01192">
    <property type="entry name" value="Enolase_C"/>
    <property type="match status" value="1"/>
</dbReference>
<dbReference type="SMART" id="SM01193">
    <property type="entry name" value="Enolase_N"/>
    <property type="match status" value="1"/>
</dbReference>
<dbReference type="SUPFAM" id="SSF51604">
    <property type="entry name" value="Enolase C-terminal domain-like"/>
    <property type="match status" value="1"/>
</dbReference>
<dbReference type="SUPFAM" id="SSF54826">
    <property type="entry name" value="Enolase N-terminal domain-like"/>
    <property type="match status" value="1"/>
</dbReference>
<dbReference type="PROSITE" id="PS00164">
    <property type="entry name" value="ENOLASE"/>
    <property type="match status" value="1"/>
</dbReference>
<accession>Q12PZ4</accession>
<protein>
    <recommendedName>
        <fullName evidence="1">Enolase</fullName>
        <ecNumber evidence="1">4.2.1.11</ecNumber>
    </recommendedName>
    <alternativeName>
        <fullName evidence="1">2-phospho-D-glycerate hydro-lyase</fullName>
    </alternativeName>
    <alternativeName>
        <fullName evidence="1">2-phosphoglycerate dehydratase</fullName>
    </alternativeName>
</protein>